<evidence type="ECO:0000250" key="1"/>
<evidence type="ECO:0000305" key="2"/>
<sequence length="317" mass="34675">MEKVYVAGAIPEVGLKLLQEHFEVEMYEGKGLVDKDTLIKGVKDATALISLLSTNVDKDVIDAGKDLKIIANYGAGFNNIDIEYAREKSIDVTNTPKASTNATADLTIGLVLAVARRIVEGDQLSRTTGFDGWAPLFFRGREVSGKTIGIIGLGEIGSAVARRARAFDMDVLYTGPNRKEEKEREIGAKYVDLDTLLKNADFITINAAYNPKMHHLIDTEQFKMMKSTAYLINASRGPIVHEQALVQALKNNEIEGAALDVYEFEPDITDDLKSLNNVVLTPHIGNATFEARDMMSKIVANAAISAVQGEKPQFVVN</sequence>
<accession>Q6GEC9</accession>
<organism>
    <name type="scientific">Staphylococcus aureus (strain MRSA252)</name>
    <dbReference type="NCBI Taxonomy" id="282458"/>
    <lineage>
        <taxon>Bacteria</taxon>
        <taxon>Bacillati</taxon>
        <taxon>Bacillota</taxon>
        <taxon>Bacilli</taxon>
        <taxon>Bacillales</taxon>
        <taxon>Staphylococcaceae</taxon>
        <taxon>Staphylococcus</taxon>
    </lineage>
</organism>
<proteinExistence type="inferred from homology"/>
<keyword id="KW-0520">NAD</keyword>
<keyword id="KW-0560">Oxidoreductase</keyword>
<protein>
    <recommendedName>
        <fullName>Putative 2-hydroxyacid dehydrogenase SAR2389</fullName>
        <ecNumber>1.1.1.-</ecNumber>
    </recommendedName>
</protein>
<reference key="1">
    <citation type="journal article" date="2004" name="Proc. Natl. Acad. Sci. U.S.A.">
        <title>Complete genomes of two clinical Staphylococcus aureus strains: evidence for the rapid evolution of virulence and drug resistance.</title>
        <authorList>
            <person name="Holden M.T.G."/>
            <person name="Feil E.J."/>
            <person name="Lindsay J.A."/>
            <person name="Peacock S.J."/>
            <person name="Day N.P.J."/>
            <person name="Enright M.C."/>
            <person name="Foster T.J."/>
            <person name="Moore C.E."/>
            <person name="Hurst L."/>
            <person name="Atkin R."/>
            <person name="Barron A."/>
            <person name="Bason N."/>
            <person name="Bentley S.D."/>
            <person name="Chillingworth C."/>
            <person name="Chillingworth T."/>
            <person name="Churcher C."/>
            <person name="Clark L."/>
            <person name="Corton C."/>
            <person name="Cronin A."/>
            <person name="Doggett J."/>
            <person name="Dowd L."/>
            <person name="Feltwell T."/>
            <person name="Hance Z."/>
            <person name="Harris B."/>
            <person name="Hauser H."/>
            <person name="Holroyd S."/>
            <person name="Jagels K."/>
            <person name="James K.D."/>
            <person name="Lennard N."/>
            <person name="Line A."/>
            <person name="Mayes R."/>
            <person name="Moule S."/>
            <person name="Mungall K."/>
            <person name="Ormond D."/>
            <person name="Quail M.A."/>
            <person name="Rabbinowitsch E."/>
            <person name="Rutherford K.M."/>
            <person name="Sanders M."/>
            <person name="Sharp S."/>
            <person name="Simmonds M."/>
            <person name="Stevens K."/>
            <person name="Whitehead S."/>
            <person name="Barrell B.G."/>
            <person name="Spratt B.G."/>
            <person name="Parkhill J."/>
        </authorList>
    </citation>
    <scope>NUCLEOTIDE SEQUENCE [LARGE SCALE GENOMIC DNA]</scope>
    <source>
        <strain>MRSA252</strain>
    </source>
</reference>
<name>Y2389_STAAR</name>
<feature type="chain" id="PRO_0000312186" description="Putative 2-hydroxyacid dehydrogenase SAR2389">
    <location>
        <begin position="1"/>
        <end position="317"/>
    </location>
</feature>
<feature type="active site" evidence="1">
    <location>
        <position position="236"/>
    </location>
</feature>
<feature type="active site" evidence="1">
    <location>
        <position position="265"/>
    </location>
</feature>
<feature type="active site" description="Proton donor" evidence="1">
    <location>
        <position position="283"/>
    </location>
</feature>
<feature type="binding site" evidence="1">
    <location>
        <begin position="155"/>
        <end position="156"/>
    </location>
    <ligand>
        <name>NAD(+)</name>
        <dbReference type="ChEBI" id="CHEBI:57540"/>
    </ligand>
</feature>
<feature type="binding site" evidence="1">
    <location>
        <begin position="234"/>
        <end position="236"/>
    </location>
    <ligand>
        <name>NAD(+)</name>
        <dbReference type="ChEBI" id="CHEBI:57540"/>
    </ligand>
</feature>
<feature type="binding site" evidence="1">
    <location>
        <position position="260"/>
    </location>
    <ligand>
        <name>NAD(+)</name>
        <dbReference type="ChEBI" id="CHEBI:57540"/>
    </ligand>
</feature>
<feature type="binding site" evidence="1">
    <location>
        <begin position="283"/>
        <end position="286"/>
    </location>
    <ligand>
        <name>NAD(+)</name>
        <dbReference type="ChEBI" id="CHEBI:57540"/>
    </ligand>
</feature>
<comment type="similarity">
    <text evidence="2">Belongs to the D-isomer specific 2-hydroxyacid dehydrogenase family.</text>
</comment>
<dbReference type="EC" id="1.1.1.-"/>
<dbReference type="EMBL" id="BX571856">
    <property type="protein sequence ID" value="CAG41370.1"/>
    <property type="molecule type" value="Genomic_DNA"/>
</dbReference>
<dbReference type="RefSeq" id="WP_000417008.1">
    <property type="nucleotide sequence ID" value="NC_002952.2"/>
</dbReference>
<dbReference type="SMR" id="Q6GEC9"/>
<dbReference type="KEGG" id="sar:SAR2389"/>
<dbReference type="HOGENOM" id="CLU_019796_1_2_9"/>
<dbReference type="Proteomes" id="UP000000596">
    <property type="component" value="Chromosome"/>
</dbReference>
<dbReference type="GO" id="GO:0051287">
    <property type="term" value="F:NAD binding"/>
    <property type="evidence" value="ECO:0007669"/>
    <property type="project" value="InterPro"/>
</dbReference>
<dbReference type="GO" id="GO:0016616">
    <property type="term" value="F:oxidoreductase activity, acting on the CH-OH group of donors, NAD or NADP as acceptor"/>
    <property type="evidence" value="ECO:0007669"/>
    <property type="project" value="InterPro"/>
</dbReference>
<dbReference type="CDD" id="cd12178">
    <property type="entry name" value="2-Hacid_dh_13"/>
    <property type="match status" value="1"/>
</dbReference>
<dbReference type="FunFam" id="3.40.50.720:FF:000462">
    <property type="entry name" value="Glyoxylate reductase (NADP+)"/>
    <property type="match status" value="1"/>
</dbReference>
<dbReference type="Gene3D" id="3.40.50.720">
    <property type="entry name" value="NAD(P)-binding Rossmann-like Domain"/>
    <property type="match status" value="2"/>
</dbReference>
<dbReference type="InterPro" id="IPR050857">
    <property type="entry name" value="D-2-hydroxyacid_DH"/>
</dbReference>
<dbReference type="InterPro" id="IPR006139">
    <property type="entry name" value="D-isomer_2_OHA_DH_cat_dom"/>
</dbReference>
<dbReference type="InterPro" id="IPR006140">
    <property type="entry name" value="D-isomer_DH_NAD-bd"/>
</dbReference>
<dbReference type="InterPro" id="IPR036291">
    <property type="entry name" value="NAD(P)-bd_dom_sf"/>
</dbReference>
<dbReference type="PANTHER" id="PTHR42789">
    <property type="entry name" value="D-ISOMER SPECIFIC 2-HYDROXYACID DEHYDROGENASE FAMILY PROTEIN (AFU_ORTHOLOGUE AFUA_6G10090)"/>
    <property type="match status" value="1"/>
</dbReference>
<dbReference type="PANTHER" id="PTHR42789:SF1">
    <property type="entry name" value="D-ISOMER SPECIFIC 2-HYDROXYACID DEHYDROGENASE FAMILY PROTEIN (AFU_ORTHOLOGUE AFUA_6G10090)"/>
    <property type="match status" value="1"/>
</dbReference>
<dbReference type="Pfam" id="PF00389">
    <property type="entry name" value="2-Hacid_dh"/>
    <property type="match status" value="1"/>
</dbReference>
<dbReference type="Pfam" id="PF02826">
    <property type="entry name" value="2-Hacid_dh_C"/>
    <property type="match status" value="1"/>
</dbReference>
<dbReference type="SUPFAM" id="SSF52283">
    <property type="entry name" value="Formate/glycerate dehydrogenase catalytic domain-like"/>
    <property type="match status" value="1"/>
</dbReference>
<dbReference type="SUPFAM" id="SSF51735">
    <property type="entry name" value="NAD(P)-binding Rossmann-fold domains"/>
    <property type="match status" value="1"/>
</dbReference>
<gene>
    <name type="ordered locus">SAR2389</name>
</gene>